<accession>Q9LZP7</accession>
<organism>
    <name type="scientific">Arabidopsis thaliana</name>
    <name type="common">Mouse-ear cress</name>
    <dbReference type="NCBI Taxonomy" id="3702"/>
    <lineage>
        <taxon>Eukaryota</taxon>
        <taxon>Viridiplantae</taxon>
        <taxon>Streptophyta</taxon>
        <taxon>Embryophyta</taxon>
        <taxon>Tracheophyta</taxon>
        <taxon>Spermatophyta</taxon>
        <taxon>Magnoliopsida</taxon>
        <taxon>eudicotyledons</taxon>
        <taxon>Gunneridae</taxon>
        <taxon>Pentapetalae</taxon>
        <taxon>rosids</taxon>
        <taxon>malvids</taxon>
        <taxon>Brassicales</taxon>
        <taxon>Brassicaceae</taxon>
        <taxon>Camelineae</taxon>
        <taxon>Arabidopsis</taxon>
    </lineage>
</organism>
<name>FB216_ARATH</name>
<protein>
    <recommendedName>
        <fullName>F-box protein At3g62430</fullName>
    </recommendedName>
</protein>
<proteinExistence type="evidence at transcript level"/>
<reference key="1">
    <citation type="journal article" date="2000" name="Nature">
        <title>Sequence and analysis of chromosome 3 of the plant Arabidopsis thaliana.</title>
        <authorList>
            <person name="Salanoubat M."/>
            <person name="Lemcke K."/>
            <person name="Rieger M."/>
            <person name="Ansorge W."/>
            <person name="Unseld M."/>
            <person name="Fartmann B."/>
            <person name="Valle G."/>
            <person name="Bloecker H."/>
            <person name="Perez-Alonso M."/>
            <person name="Obermaier B."/>
            <person name="Delseny M."/>
            <person name="Boutry M."/>
            <person name="Grivell L.A."/>
            <person name="Mache R."/>
            <person name="Puigdomenech P."/>
            <person name="De Simone V."/>
            <person name="Choisne N."/>
            <person name="Artiguenave F."/>
            <person name="Robert C."/>
            <person name="Brottier P."/>
            <person name="Wincker P."/>
            <person name="Cattolico L."/>
            <person name="Weissenbach J."/>
            <person name="Saurin W."/>
            <person name="Quetier F."/>
            <person name="Schaefer M."/>
            <person name="Mueller-Auer S."/>
            <person name="Gabel C."/>
            <person name="Fuchs M."/>
            <person name="Benes V."/>
            <person name="Wurmbach E."/>
            <person name="Drzonek H."/>
            <person name="Erfle H."/>
            <person name="Jordan N."/>
            <person name="Bangert S."/>
            <person name="Wiedelmann R."/>
            <person name="Kranz H."/>
            <person name="Voss H."/>
            <person name="Holland R."/>
            <person name="Brandt P."/>
            <person name="Nyakatura G."/>
            <person name="Vezzi A."/>
            <person name="D'Angelo M."/>
            <person name="Pallavicini A."/>
            <person name="Toppo S."/>
            <person name="Simionati B."/>
            <person name="Conrad A."/>
            <person name="Hornischer K."/>
            <person name="Kauer G."/>
            <person name="Loehnert T.-H."/>
            <person name="Nordsiek G."/>
            <person name="Reichelt J."/>
            <person name="Scharfe M."/>
            <person name="Schoen O."/>
            <person name="Bargues M."/>
            <person name="Terol J."/>
            <person name="Climent J."/>
            <person name="Navarro P."/>
            <person name="Collado C."/>
            <person name="Perez-Perez A."/>
            <person name="Ottenwaelder B."/>
            <person name="Duchemin D."/>
            <person name="Cooke R."/>
            <person name="Laudie M."/>
            <person name="Berger-Llauro C."/>
            <person name="Purnelle B."/>
            <person name="Masuy D."/>
            <person name="de Haan M."/>
            <person name="Maarse A.C."/>
            <person name="Alcaraz J.-P."/>
            <person name="Cottet A."/>
            <person name="Casacuberta E."/>
            <person name="Monfort A."/>
            <person name="Argiriou A."/>
            <person name="Flores M."/>
            <person name="Liguori R."/>
            <person name="Vitale D."/>
            <person name="Mannhaupt G."/>
            <person name="Haase D."/>
            <person name="Schoof H."/>
            <person name="Rudd S."/>
            <person name="Zaccaria P."/>
            <person name="Mewes H.-W."/>
            <person name="Mayer K.F.X."/>
            <person name="Kaul S."/>
            <person name="Town C.D."/>
            <person name="Koo H.L."/>
            <person name="Tallon L.J."/>
            <person name="Jenkins J."/>
            <person name="Rooney T."/>
            <person name="Rizzo M."/>
            <person name="Walts A."/>
            <person name="Utterback T."/>
            <person name="Fujii C.Y."/>
            <person name="Shea T.P."/>
            <person name="Creasy T.H."/>
            <person name="Haas B."/>
            <person name="Maiti R."/>
            <person name="Wu D."/>
            <person name="Peterson J."/>
            <person name="Van Aken S."/>
            <person name="Pai G."/>
            <person name="Militscher J."/>
            <person name="Sellers P."/>
            <person name="Gill J.E."/>
            <person name="Feldblyum T.V."/>
            <person name="Preuss D."/>
            <person name="Lin X."/>
            <person name="Nierman W.C."/>
            <person name="Salzberg S.L."/>
            <person name="White O."/>
            <person name="Venter J.C."/>
            <person name="Fraser C.M."/>
            <person name="Kaneko T."/>
            <person name="Nakamura Y."/>
            <person name="Sato S."/>
            <person name="Kato T."/>
            <person name="Asamizu E."/>
            <person name="Sasamoto S."/>
            <person name="Kimura T."/>
            <person name="Idesawa K."/>
            <person name="Kawashima K."/>
            <person name="Kishida Y."/>
            <person name="Kiyokawa C."/>
            <person name="Kohara M."/>
            <person name="Matsumoto M."/>
            <person name="Matsuno A."/>
            <person name="Muraki A."/>
            <person name="Nakayama S."/>
            <person name="Nakazaki N."/>
            <person name="Shinpo S."/>
            <person name="Takeuchi C."/>
            <person name="Wada T."/>
            <person name="Watanabe A."/>
            <person name="Yamada M."/>
            <person name="Yasuda M."/>
            <person name="Tabata S."/>
        </authorList>
    </citation>
    <scope>NUCLEOTIDE SEQUENCE [LARGE SCALE GENOMIC DNA]</scope>
    <source>
        <strain>cv. Columbia</strain>
    </source>
</reference>
<reference key="2">
    <citation type="journal article" date="2017" name="Plant J.">
        <title>Araport11: a complete reannotation of the Arabidopsis thaliana reference genome.</title>
        <authorList>
            <person name="Cheng C.Y."/>
            <person name="Krishnakumar V."/>
            <person name="Chan A.P."/>
            <person name="Thibaud-Nissen F."/>
            <person name="Schobel S."/>
            <person name="Town C.D."/>
        </authorList>
    </citation>
    <scope>GENOME REANNOTATION</scope>
    <source>
        <strain>cv. Columbia</strain>
    </source>
</reference>
<sequence>MDRISNLPDGVIYRVISLLSTKEATCLKYTSKNWLNLVTIIPIAVFVDSSASAISASFKDFADRIMLARLASHRIRRFSLKLQSLNFAQYKTVNDCLRNVLECGVLDLELDINVRGDYSLPSEIFTCKSVVKMKLGSGFVIDILPKNAWLPALKTLLLDTVRFEFDNTAGCSFTKLISACPVLEELVIDGHNCEDWKWSRRVSSQILKRLTIRRKEWVHDGSSFEPISLDIPSLEYFKYFDTLRDSYPVVKLNSLVEAKLELPSLYIGDTYNVRNLIKGLKNVQILRLGAVDTMHLFWVFREAVPVFENLFHLSVSTHDAICWDDLRILLEKSPNLKTLTIEALHYHGYGDENSVCECLDGYSFLLSCPIEILKITEFGGEIEEMEQVEYVLENLLCLVLLEIHVKTKKIDRKLQILADLLMLPRASSKCKVQVKFV</sequence>
<dbReference type="EMBL" id="AL162507">
    <property type="protein sequence ID" value="CAB82957.1"/>
    <property type="molecule type" value="Genomic_DNA"/>
</dbReference>
<dbReference type="EMBL" id="CP002686">
    <property type="protein sequence ID" value="AEE80352.1"/>
    <property type="molecule type" value="Genomic_DNA"/>
</dbReference>
<dbReference type="PIR" id="T48035">
    <property type="entry name" value="T48035"/>
</dbReference>
<dbReference type="RefSeq" id="NP_191802.1">
    <property type="nucleotide sequence ID" value="NM_116108.2"/>
</dbReference>
<dbReference type="BioGRID" id="10730">
    <property type="interactions" value="5"/>
</dbReference>
<dbReference type="FunCoup" id="Q9LZP7">
    <property type="interactions" value="4"/>
</dbReference>
<dbReference type="iPTMnet" id="Q9LZP7"/>
<dbReference type="PaxDb" id="3702-AT3G62430.1"/>
<dbReference type="EnsemblPlants" id="AT3G62430.1">
    <property type="protein sequence ID" value="AT3G62430.1"/>
    <property type="gene ID" value="AT3G62430"/>
</dbReference>
<dbReference type="GeneID" id="825416"/>
<dbReference type="Gramene" id="AT3G62430.1">
    <property type="protein sequence ID" value="AT3G62430.1"/>
    <property type="gene ID" value="AT3G62430"/>
</dbReference>
<dbReference type="KEGG" id="ath:AT3G62430"/>
<dbReference type="Araport" id="AT3G62430"/>
<dbReference type="TAIR" id="AT3G62430"/>
<dbReference type="HOGENOM" id="CLU_010721_7_1_1"/>
<dbReference type="InParanoid" id="Q9LZP7"/>
<dbReference type="OMA" id="HHEYREY"/>
<dbReference type="PhylomeDB" id="Q9LZP7"/>
<dbReference type="PRO" id="PR:Q9LZP7"/>
<dbReference type="Proteomes" id="UP000006548">
    <property type="component" value="Chromosome 3"/>
</dbReference>
<dbReference type="ExpressionAtlas" id="Q9LZP7">
    <property type="expression patterns" value="baseline and differential"/>
</dbReference>
<dbReference type="Gene3D" id="3.80.10.10">
    <property type="entry name" value="Ribonuclease Inhibitor"/>
    <property type="match status" value="1"/>
</dbReference>
<dbReference type="InterPro" id="IPR036047">
    <property type="entry name" value="F-box-like_dom_sf"/>
</dbReference>
<dbReference type="InterPro" id="IPR001810">
    <property type="entry name" value="F-box_dom"/>
</dbReference>
<dbReference type="InterPro" id="IPR006566">
    <property type="entry name" value="FBD"/>
</dbReference>
<dbReference type="InterPro" id="IPR055294">
    <property type="entry name" value="FBL60-like"/>
</dbReference>
<dbReference type="InterPro" id="IPR032675">
    <property type="entry name" value="LRR_dom_sf"/>
</dbReference>
<dbReference type="InterPro" id="IPR055411">
    <property type="entry name" value="LRR_FXL15/At3g58940/PEG3-like"/>
</dbReference>
<dbReference type="PANTHER" id="PTHR31293">
    <property type="entry name" value="RNI-LIKE SUPERFAMILY PROTEIN"/>
    <property type="match status" value="1"/>
</dbReference>
<dbReference type="PANTHER" id="PTHR31293:SF12">
    <property type="entry name" value="RNI-LIKE SUPERFAMILY PROTEIN"/>
    <property type="match status" value="1"/>
</dbReference>
<dbReference type="Pfam" id="PF00646">
    <property type="entry name" value="F-box"/>
    <property type="match status" value="1"/>
</dbReference>
<dbReference type="Pfam" id="PF24758">
    <property type="entry name" value="LRR_At5g56370"/>
    <property type="match status" value="1"/>
</dbReference>
<dbReference type="SMART" id="SM00579">
    <property type="entry name" value="FBD"/>
    <property type="match status" value="1"/>
</dbReference>
<dbReference type="SUPFAM" id="SSF81383">
    <property type="entry name" value="F-box domain"/>
    <property type="match status" value="1"/>
</dbReference>
<dbReference type="SUPFAM" id="SSF52047">
    <property type="entry name" value="RNI-like"/>
    <property type="match status" value="1"/>
</dbReference>
<gene>
    <name type="ordered locus">At3g62430</name>
    <name type="ORF">T12C14.130</name>
</gene>
<keyword id="KW-1185">Reference proteome</keyword>
<feature type="chain" id="PRO_0000283485" description="F-box protein At3g62430">
    <location>
        <begin position="1"/>
        <end position="437"/>
    </location>
</feature>
<feature type="domain" description="F-box">
    <location>
        <begin position="1"/>
        <end position="49"/>
    </location>
</feature>